<name>PXPA_SALG2</name>
<reference key="1">
    <citation type="journal article" date="2008" name="Genome Res.">
        <title>Comparative genome analysis of Salmonella enteritidis PT4 and Salmonella gallinarum 287/91 provides insights into evolutionary and host adaptation pathways.</title>
        <authorList>
            <person name="Thomson N.R."/>
            <person name="Clayton D.J."/>
            <person name="Windhorst D."/>
            <person name="Vernikos G."/>
            <person name="Davidson S."/>
            <person name="Churcher C."/>
            <person name="Quail M.A."/>
            <person name="Stevens M."/>
            <person name="Jones M.A."/>
            <person name="Watson M."/>
            <person name="Barron A."/>
            <person name="Layton A."/>
            <person name="Pickard D."/>
            <person name="Kingsley R.A."/>
            <person name="Bignell A."/>
            <person name="Clark L."/>
            <person name="Harris B."/>
            <person name="Ormond D."/>
            <person name="Abdellah Z."/>
            <person name="Brooks K."/>
            <person name="Cherevach I."/>
            <person name="Chillingworth T."/>
            <person name="Woodward J."/>
            <person name="Norberczak H."/>
            <person name="Lord A."/>
            <person name="Arrowsmith C."/>
            <person name="Jagels K."/>
            <person name="Moule S."/>
            <person name="Mungall K."/>
            <person name="Saunders M."/>
            <person name="Whitehead S."/>
            <person name="Chabalgoity J.A."/>
            <person name="Maskell D."/>
            <person name="Humphreys T."/>
            <person name="Roberts M."/>
            <person name="Barrow P.A."/>
            <person name="Dougan G."/>
            <person name="Parkhill J."/>
        </authorList>
    </citation>
    <scope>NUCLEOTIDE SEQUENCE [LARGE SCALE GENOMIC DNA]</scope>
    <source>
        <strain>287/91 / NCTC 13346</strain>
    </source>
</reference>
<dbReference type="EC" id="3.5.2.9" evidence="1"/>
<dbReference type="EMBL" id="AM933173">
    <property type="protein sequence ID" value="CAR36606.1"/>
    <property type="molecule type" value="Genomic_DNA"/>
</dbReference>
<dbReference type="RefSeq" id="WP_001017925.1">
    <property type="nucleotide sequence ID" value="NC_011274.1"/>
</dbReference>
<dbReference type="SMR" id="B5R678"/>
<dbReference type="KEGG" id="seg:SG0710"/>
<dbReference type="HOGENOM" id="CLU_069535_0_0_6"/>
<dbReference type="Proteomes" id="UP000008321">
    <property type="component" value="Chromosome"/>
</dbReference>
<dbReference type="GO" id="GO:0017168">
    <property type="term" value="F:5-oxoprolinase (ATP-hydrolyzing) activity"/>
    <property type="evidence" value="ECO:0007669"/>
    <property type="project" value="UniProtKB-UniRule"/>
</dbReference>
<dbReference type="GO" id="GO:0005524">
    <property type="term" value="F:ATP binding"/>
    <property type="evidence" value="ECO:0007669"/>
    <property type="project" value="UniProtKB-UniRule"/>
</dbReference>
<dbReference type="GO" id="GO:0005975">
    <property type="term" value="P:carbohydrate metabolic process"/>
    <property type="evidence" value="ECO:0007669"/>
    <property type="project" value="InterPro"/>
</dbReference>
<dbReference type="CDD" id="cd10800">
    <property type="entry name" value="LamB_YcsF_YbgL_like"/>
    <property type="match status" value="1"/>
</dbReference>
<dbReference type="Gene3D" id="3.20.20.370">
    <property type="entry name" value="Glycoside hydrolase/deacetylase"/>
    <property type="match status" value="1"/>
</dbReference>
<dbReference type="HAMAP" id="MF_00691">
    <property type="entry name" value="PxpA"/>
    <property type="match status" value="1"/>
</dbReference>
<dbReference type="InterPro" id="IPR011330">
    <property type="entry name" value="Glyco_hydro/deAcase_b/a-brl"/>
</dbReference>
<dbReference type="InterPro" id="IPR005501">
    <property type="entry name" value="LamB/YcsF/PxpA-like"/>
</dbReference>
<dbReference type="NCBIfam" id="NF003812">
    <property type="entry name" value="PRK05406.1-1"/>
    <property type="match status" value="1"/>
</dbReference>
<dbReference type="NCBIfam" id="NF003814">
    <property type="entry name" value="PRK05406.1-3"/>
    <property type="match status" value="1"/>
</dbReference>
<dbReference type="NCBIfam" id="NF003815">
    <property type="entry name" value="PRK05406.1-4"/>
    <property type="match status" value="1"/>
</dbReference>
<dbReference type="NCBIfam" id="NF003816">
    <property type="entry name" value="PRK05406.1-5"/>
    <property type="match status" value="1"/>
</dbReference>
<dbReference type="PANTHER" id="PTHR30292:SF0">
    <property type="entry name" value="5-OXOPROLINASE SUBUNIT A"/>
    <property type="match status" value="1"/>
</dbReference>
<dbReference type="PANTHER" id="PTHR30292">
    <property type="entry name" value="UNCHARACTERIZED PROTEIN YBGL-RELATED"/>
    <property type="match status" value="1"/>
</dbReference>
<dbReference type="Pfam" id="PF03746">
    <property type="entry name" value="LamB_YcsF"/>
    <property type="match status" value="1"/>
</dbReference>
<dbReference type="SUPFAM" id="SSF88713">
    <property type="entry name" value="Glycoside hydrolase/deacetylase"/>
    <property type="match status" value="1"/>
</dbReference>
<sequence>MNIDLNADVGEGCASDSELLTLVSSANIACGFHAGDAQTMLTSVREALKNGVAIGAHPSFPDRDNFGRTAMALPPETVYAQTLYQIGALGAIVQAQGSVMRHVKPHGMLYNQAAKDPHLAQAIAKAVHDYDPSLILVGLAGSELIRAGERHRLVTRQEVFADRGYQADGSLVPRMQPGALIHDEEQALAQTLDMVQAGRVKSVTGVWTTVTAQTVCIHGDGEYALAFARRLRAAFNARNIHVIA</sequence>
<comment type="function">
    <text evidence="1">Catalyzes the cleavage of 5-oxoproline to form L-glutamate coupled to the hydrolysis of ATP to ADP and inorganic phosphate.</text>
</comment>
<comment type="catalytic activity">
    <reaction evidence="1">
        <text>5-oxo-L-proline + ATP + 2 H2O = L-glutamate + ADP + phosphate + H(+)</text>
        <dbReference type="Rhea" id="RHEA:10348"/>
        <dbReference type="ChEBI" id="CHEBI:15377"/>
        <dbReference type="ChEBI" id="CHEBI:15378"/>
        <dbReference type="ChEBI" id="CHEBI:29985"/>
        <dbReference type="ChEBI" id="CHEBI:30616"/>
        <dbReference type="ChEBI" id="CHEBI:43474"/>
        <dbReference type="ChEBI" id="CHEBI:58402"/>
        <dbReference type="ChEBI" id="CHEBI:456216"/>
        <dbReference type="EC" id="3.5.2.9"/>
    </reaction>
</comment>
<comment type="subunit">
    <text evidence="1">Forms a complex composed of PxpA, PxpB and PxpC.</text>
</comment>
<comment type="similarity">
    <text evidence="1">Belongs to the LamB/PxpA family.</text>
</comment>
<protein>
    <recommendedName>
        <fullName evidence="1">5-oxoprolinase subunit A</fullName>
        <shortName evidence="1">5-OPase subunit A</shortName>
        <ecNumber evidence="1">3.5.2.9</ecNumber>
    </recommendedName>
    <alternativeName>
        <fullName evidence="1">5-oxoprolinase (ATP-hydrolyzing) subunit A</fullName>
    </alternativeName>
</protein>
<evidence type="ECO:0000255" key="1">
    <source>
        <dbReference type="HAMAP-Rule" id="MF_00691"/>
    </source>
</evidence>
<organism>
    <name type="scientific">Salmonella gallinarum (strain 287/91 / NCTC 13346)</name>
    <dbReference type="NCBI Taxonomy" id="550538"/>
    <lineage>
        <taxon>Bacteria</taxon>
        <taxon>Pseudomonadati</taxon>
        <taxon>Pseudomonadota</taxon>
        <taxon>Gammaproteobacteria</taxon>
        <taxon>Enterobacterales</taxon>
        <taxon>Enterobacteriaceae</taxon>
        <taxon>Salmonella</taxon>
    </lineage>
</organism>
<proteinExistence type="inferred from homology"/>
<feature type="chain" id="PRO_1000132071" description="5-oxoprolinase subunit A">
    <location>
        <begin position="1"/>
        <end position="244"/>
    </location>
</feature>
<gene>
    <name evidence="1" type="primary">pxpA</name>
    <name type="ordered locus">SG0710</name>
</gene>
<keyword id="KW-0067">ATP-binding</keyword>
<keyword id="KW-0378">Hydrolase</keyword>
<keyword id="KW-0547">Nucleotide-binding</keyword>
<accession>B5R678</accession>